<dbReference type="EMBL" id="CR380957">
    <property type="protein sequence ID" value="CAG61283.1"/>
    <property type="molecule type" value="Genomic_DNA"/>
</dbReference>
<dbReference type="RefSeq" id="XP_448322.1">
    <property type="nucleotide sequence ID" value="XM_448322.1"/>
</dbReference>
<dbReference type="SMR" id="Q6FN72"/>
<dbReference type="FunCoup" id="Q6FN72">
    <property type="interactions" value="1312"/>
</dbReference>
<dbReference type="STRING" id="284593.Q6FN72"/>
<dbReference type="EnsemblFungi" id="CAGL0K02233g-T">
    <property type="protein sequence ID" value="CAGL0K02233g-T-p1"/>
    <property type="gene ID" value="CAGL0K02233g"/>
</dbReference>
<dbReference type="KEGG" id="cgr:2890299"/>
<dbReference type="CGD" id="CAL0134657">
    <property type="gene designation" value="CAGL0K02233g"/>
</dbReference>
<dbReference type="VEuPathDB" id="FungiDB:B1J91_K02233g"/>
<dbReference type="VEuPathDB" id="FungiDB:CAGL0K02233g"/>
<dbReference type="eggNOG" id="KOG3163">
    <property type="taxonomic scope" value="Eukaryota"/>
</dbReference>
<dbReference type="HOGENOM" id="CLU_1070048_0_0_1"/>
<dbReference type="InParanoid" id="Q6FN72"/>
<dbReference type="OMA" id="TNTPEND"/>
<dbReference type="Proteomes" id="UP000002428">
    <property type="component" value="Chromosome K"/>
</dbReference>
<dbReference type="GO" id="GO:0005730">
    <property type="term" value="C:nucleolus"/>
    <property type="evidence" value="ECO:0007669"/>
    <property type="project" value="UniProtKB-SubCell"/>
</dbReference>
<dbReference type="GO" id="GO:0030687">
    <property type="term" value="C:preribosome, large subunit precursor"/>
    <property type="evidence" value="ECO:0007669"/>
    <property type="project" value="EnsemblFungi"/>
</dbReference>
<dbReference type="GO" id="GO:0000466">
    <property type="term" value="P:maturation of 5.8S rRNA from tricistronic rRNA transcript (SSU-rRNA, 5.8S rRNA, LSU-rRNA)"/>
    <property type="evidence" value="ECO:0007669"/>
    <property type="project" value="EnsemblFungi"/>
</dbReference>
<dbReference type="GO" id="GO:0000463">
    <property type="term" value="P:maturation of LSU-rRNA from tricistronic rRNA transcript (SSU-rRNA, 5.8S rRNA, LSU-rRNA)"/>
    <property type="evidence" value="ECO:0007669"/>
    <property type="project" value="EnsemblFungi"/>
</dbReference>
<dbReference type="CDD" id="cd11381">
    <property type="entry name" value="NSA2"/>
    <property type="match status" value="1"/>
</dbReference>
<dbReference type="FunFam" id="2.40.10.310:FF:000001">
    <property type="entry name" value="NSA2, ribosome biogenesis homolog"/>
    <property type="match status" value="1"/>
</dbReference>
<dbReference type="Gene3D" id="2.40.10.310">
    <property type="match status" value="1"/>
</dbReference>
<dbReference type="InterPro" id="IPR039411">
    <property type="entry name" value="NSA2_fam"/>
</dbReference>
<dbReference type="InterPro" id="IPR022309">
    <property type="entry name" value="Ribosomal_Se8/biogenesis_NSA2"/>
</dbReference>
<dbReference type="PANTHER" id="PTHR12642">
    <property type="entry name" value="RIBOSOME BIOGENESIS PROTEIN NSA2 HOMOLOG"/>
    <property type="match status" value="1"/>
</dbReference>
<dbReference type="Pfam" id="PF01201">
    <property type="entry name" value="Ribosomal_S8e"/>
    <property type="match status" value="1"/>
</dbReference>
<keyword id="KW-0539">Nucleus</keyword>
<keyword id="KW-1185">Reference proteome</keyword>
<keyword id="KW-0687">Ribonucleoprotein</keyword>
<keyword id="KW-0690">Ribosome biogenesis</keyword>
<keyword id="KW-0698">rRNA processing</keyword>
<protein>
    <recommendedName>
        <fullName>Ribosome biogenesis protein NSA2</fullName>
    </recommendedName>
</protein>
<gene>
    <name type="primary">NSA2</name>
    <name type="ordered locus">CAGL0K02233g</name>
</gene>
<feature type="chain" id="PRO_0000320413" description="Ribosome biogenesis protein NSA2">
    <location>
        <begin position="1"/>
        <end position="261"/>
    </location>
</feature>
<feature type="region of interest" description="Disordered" evidence="4">
    <location>
        <begin position="64"/>
        <end position="84"/>
    </location>
</feature>
<feature type="short sequence motif" description="Nuclear localization signal 1" evidence="3">
    <location>
        <begin position="15"/>
        <end position="22"/>
    </location>
</feature>
<feature type="short sequence motif" description="Nuclear localization signal 2" evidence="3">
    <location>
        <begin position="51"/>
        <end position="58"/>
    </location>
</feature>
<name>NSA2_CANGA</name>
<proteinExistence type="inferred from homology"/>
<reference key="1">
    <citation type="journal article" date="2004" name="Nature">
        <title>Genome evolution in yeasts.</title>
        <authorList>
            <person name="Dujon B."/>
            <person name="Sherman D."/>
            <person name="Fischer G."/>
            <person name="Durrens P."/>
            <person name="Casaregola S."/>
            <person name="Lafontaine I."/>
            <person name="de Montigny J."/>
            <person name="Marck C."/>
            <person name="Neuveglise C."/>
            <person name="Talla E."/>
            <person name="Goffard N."/>
            <person name="Frangeul L."/>
            <person name="Aigle M."/>
            <person name="Anthouard V."/>
            <person name="Babour A."/>
            <person name="Barbe V."/>
            <person name="Barnay S."/>
            <person name="Blanchin S."/>
            <person name="Beckerich J.-M."/>
            <person name="Beyne E."/>
            <person name="Bleykasten C."/>
            <person name="Boisrame A."/>
            <person name="Boyer J."/>
            <person name="Cattolico L."/>
            <person name="Confanioleri F."/>
            <person name="de Daruvar A."/>
            <person name="Despons L."/>
            <person name="Fabre E."/>
            <person name="Fairhead C."/>
            <person name="Ferry-Dumazet H."/>
            <person name="Groppi A."/>
            <person name="Hantraye F."/>
            <person name="Hennequin C."/>
            <person name="Jauniaux N."/>
            <person name="Joyet P."/>
            <person name="Kachouri R."/>
            <person name="Kerrest A."/>
            <person name="Koszul R."/>
            <person name="Lemaire M."/>
            <person name="Lesur I."/>
            <person name="Ma L."/>
            <person name="Muller H."/>
            <person name="Nicaud J.-M."/>
            <person name="Nikolski M."/>
            <person name="Oztas S."/>
            <person name="Ozier-Kalogeropoulos O."/>
            <person name="Pellenz S."/>
            <person name="Potier S."/>
            <person name="Richard G.-F."/>
            <person name="Straub M.-L."/>
            <person name="Suleau A."/>
            <person name="Swennen D."/>
            <person name="Tekaia F."/>
            <person name="Wesolowski-Louvel M."/>
            <person name="Westhof E."/>
            <person name="Wirth B."/>
            <person name="Zeniou-Meyer M."/>
            <person name="Zivanovic Y."/>
            <person name="Bolotin-Fukuhara M."/>
            <person name="Thierry A."/>
            <person name="Bouchier C."/>
            <person name="Caudron B."/>
            <person name="Scarpelli C."/>
            <person name="Gaillardin C."/>
            <person name="Weissenbach J."/>
            <person name="Wincker P."/>
            <person name="Souciet J.-L."/>
        </authorList>
    </citation>
    <scope>NUCLEOTIDE SEQUENCE [LARGE SCALE GENOMIC DNA]</scope>
    <source>
        <strain>ATCC 2001 / BCRC 20586 / JCM 3761 / NBRC 0622 / NRRL Y-65 / CBS 138</strain>
    </source>
</reference>
<accession>Q6FN72</accession>
<sequence length="261" mass="29645">MPQNDYIERHIKQHGRRLDYEERKRKREAREVHKVAEKAQKLTGWKGKQFAKKRYAEKVAMRKKIKAHEQSKAKGSSKPLADNGEALPTYLLDREQTNTAKAISSSIKQKRLEKADKFSVPLPKVRGISEEEMFKVVKTGKSKSKSWKRMITKHTFVGEGFTRRPVKMERIIRPSALRQKKANVTHPELGVTVFLPILGVKKNPQSPMYTQLGVLTKGTIIEVNVSELGMVTSGGKVVWGKYAQITNEPDRDGCVNAILLV</sequence>
<organism>
    <name type="scientific">Candida glabrata (strain ATCC 2001 / BCRC 20586 / JCM 3761 / NBRC 0622 / NRRL Y-65 / CBS 138)</name>
    <name type="common">Yeast</name>
    <name type="synonym">Nakaseomyces glabratus</name>
    <dbReference type="NCBI Taxonomy" id="284593"/>
    <lineage>
        <taxon>Eukaryota</taxon>
        <taxon>Fungi</taxon>
        <taxon>Dikarya</taxon>
        <taxon>Ascomycota</taxon>
        <taxon>Saccharomycotina</taxon>
        <taxon>Saccharomycetes</taxon>
        <taxon>Saccharomycetales</taxon>
        <taxon>Saccharomycetaceae</taxon>
        <taxon>Nakaseomyces</taxon>
    </lineage>
</organism>
<comment type="function">
    <text evidence="1">Involved in the biogenesis of the 60S ribosomal subunit. May play a part in the quality control of pre-60S particles (By similarity).</text>
</comment>
<comment type="subunit">
    <text evidence="2">Component of the pre-66S ribosomal particle. Interacts with NOP7 and RRP1. Interacts with RSA4 (via WD repeats).</text>
</comment>
<comment type="subcellular location">
    <subcellularLocation>
        <location evidence="1">Nucleus</location>
        <location evidence="1">Nucleolus</location>
    </subcellularLocation>
</comment>
<comment type="similarity">
    <text evidence="5">Belongs to the eukaryotic ribosomal protein eS8 family. Ribosome biogenesis protein NSA2 subfamily.</text>
</comment>
<evidence type="ECO:0000250" key="1"/>
<evidence type="ECO:0000250" key="2">
    <source>
        <dbReference type="UniProtKB" id="P40078"/>
    </source>
</evidence>
<evidence type="ECO:0000255" key="3">
    <source>
        <dbReference type="PROSITE-ProRule" id="PRU00768"/>
    </source>
</evidence>
<evidence type="ECO:0000256" key="4">
    <source>
        <dbReference type="SAM" id="MobiDB-lite"/>
    </source>
</evidence>
<evidence type="ECO:0000305" key="5"/>